<dbReference type="EMBL" id="AE000782">
    <property type="protein sequence ID" value="AAB90706.1"/>
    <property type="molecule type" value="Genomic_DNA"/>
</dbReference>
<dbReference type="PIR" id="D69317">
    <property type="entry name" value="D69317"/>
</dbReference>
<dbReference type="RefSeq" id="WP_010878047.1">
    <property type="nucleotide sequence ID" value="NC_000917.1"/>
</dbReference>
<dbReference type="SMR" id="O29710"/>
<dbReference type="STRING" id="224325.AF_0540"/>
<dbReference type="PaxDb" id="224325-AF_0540"/>
<dbReference type="EnsemblBacteria" id="AAB90706">
    <property type="protein sequence ID" value="AAB90706"/>
    <property type="gene ID" value="AF_0540"/>
</dbReference>
<dbReference type="KEGG" id="afu:AF_0540"/>
<dbReference type="eggNOG" id="arCOG04220">
    <property type="taxonomic scope" value="Archaea"/>
</dbReference>
<dbReference type="HOGENOM" id="CLU_1212564_0_0_2"/>
<dbReference type="PhylomeDB" id="O29710"/>
<dbReference type="Proteomes" id="UP000002199">
    <property type="component" value="Chromosome"/>
</dbReference>
<dbReference type="GO" id="GO:0016020">
    <property type="term" value="C:membrane"/>
    <property type="evidence" value="ECO:0007669"/>
    <property type="project" value="UniProtKB-SubCell"/>
</dbReference>
<dbReference type="SUPFAM" id="SSF90257">
    <property type="entry name" value="Myosin rod fragments"/>
    <property type="match status" value="1"/>
</dbReference>
<reference key="1">
    <citation type="journal article" date="1997" name="Nature">
        <title>The complete genome sequence of the hyperthermophilic, sulphate-reducing archaeon Archaeoglobus fulgidus.</title>
        <authorList>
            <person name="Klenk H.-P."/>
            <person name="Clayton R.A."/>
            <person name="Tomb J.-F."/>
            <person name="White O."/>
            <person name="Nelson K.E."/>
            <person name="Ketchum K.A."/>
            <person name="Dodson R.J."/>
            <person name="Gwinn M.L."/>
            <person name="Hickey E.K."/>
            <person name="Peterson J.D."/>
            <person name="Richardson D.L."/>
            <person name="Kerlavage A.R."/>
            <person name="Graham D.E."/>
            <person name="Kyrpides N.C."/>
            <person name="Fleischmann R.D."/>
            <person name="Quackenbush J."/>
            <person name="Lee N.H."/>
            <person name="Sutton G.G."/>
            <person name="Gill S.R."/>
            <person name="Kirkness E.F."/>
            <person name="Dougherty B.A."/>
            <person name="McKenney K."/>
            <person name="Adams M.D."/>
            <person name="Loftus B.J."/>
            <person name="Peterson S.N."/>
            <person name="Reich C.I."/>
            <person name="McNeil L.K."/>
            <person name="Badger J.H."/>
            <person name="Glodek A."/>
            <person name="Zhou L."/>
            <person name="Overbeek R."/>
            <person name="Gocayne J.D."/>
            <person name="Weidman J.F."/>
            <person name="McDonald L.A."/>
            <person name="Utterback T.R."/>
            <person name="Cotton M.D."/>
            <person name="Spriggs T."/>
            <person name="Artiach P."/>
            <person name="Kaine B.P."/>
            <person name="Sykes S.M."/>
            <person name="Sadow P.W."/>
            <person name="D'Andrea K.P."/>
            <person name="Bowman C."/>
            <person name="Fujii C."/>
            <person name="Garland S.A."/>
            <person name="Mason T.M."/>
            <person name="Olsen G.J."/>
            <person name="Fraser C.M."/>
            <person name="Smith H.O."/>
            <person name="Woese C.R."/>
            <person name="Venter J.C."/>
        </authorList>
    </citation>
    <scope>NUCLEOTIDE SEQUENCE [LARGE SCALE GENOMIC DNA]</scope>
    <source>
        <strain>ATCC 49558 / DSM 4304 / JCM 9628 / NBRC 100126 / VC-16</strain>
    </source>
</reference>
<gene>
    <name type="ordered locus">AF_0540</name>
</gene>
<organism>
    <name type="scientific">Archaeoglobus fulgidus (strain ATCC 49558 / DSM 4304 / JCM 9628 / NBRC 100126 / VC-16)</name>
    <dbReference type="NCBI Taxonomy" id="224325"/>
    <lineage>
        <taxon>Archaea</taxon>
        <taxon>Methanobacteriati</taxon>
        <taxon>Methanobacteriota</taxon>
        <taxon>Archaeoglobi</taxon>
        <taxon>Archaeoglobales</taxon>
        <taxon>Archaeoglobaceae</taxon>
        <taxon>Archaeoglobus</taxon>
    </lineage>
</organism>
<accession>O29710</accession>
<evidence type="ECO:0000255" key="1"/>
<evidence type="ECO:0000305" key="2"/>
<comment type="subcellular location">
    <subcellularLocation>
        <location evidence="2">Membrane</location>
        <topology evidence="2">Single-pass membrane protein</topology>
    </subcellularLocation>
</comment>
<comment type="similarity">
    <text evidence="2">To A.fulgidus AF_1225.</text>
</comment>
<sequence length="228" mass="25862">MILLLLALISATTAFQGDVVNLTLNEQATVTLDECMYFLDTLQNSSTLPPGEYGIKITHSCLGNEQIEIRTNTTTDVITIKVEKDPNPEESLVEAENEVLSLRKEVQRLEGEVSYYKKLFEVLNKINVDLYDKLQNLATENDELKRELELYKSKAGNYSQLIDELRLELSKMNETVRQLQATNEDLQANLTKIDAELSRASANLELFQTLFFVTLSFLVGSAFALMRR</sequence>
<proteinExistence type="inferred from homology"/>
<keyword id="KW-0472">Membrane</keyword>
<keyword id="KW-1185">Reference proteome</keyword>
<keyword id="KW-0732">Signal</keyword>
<keyword id="KW-0812">Transmembrane</keyword>
<keyword id="KW-1133">Transmembrane helix</keyword>
<protein>
    <recommendedName>
        <fullName>Uncharacterized protein AF_0540</fullName>
    </recommendedName>
</protein>
<name>Y540_ARCFU</name>
<feature type="signal peptide" evidence="1">
    <location>
        <begin position="1"/>
        <end position="16"/>
    </location>
</feature>
<feature type="chain" id="PRO_0000013642" description="Uncharacterized protein AF_0540">
    <location>
        <begin position="17"/>
        <end position="228"/>
    </location>
</feature>
<feature type="transmembrane region" description="Helical" evidence="1">
    <location>
        <begin position="206"/>
        <end position="225"/>
    </location>
</feature>